<sequence>MSRYDSHLKCSFCGKSQEQVRKLIAGPGVYICDECVDLCNEILDEELFDGNANPAPPPGSPKPATAATTSHQGPRKPKRSLTLSQIPKPHDIKRYLDHHVIGQNEAKKMLSVAVYNHYKRLAYQQSAEEAGETIEIQKSNILLIGPTGCGKTLLAQTLAKLLDVPFAVADATTLTEAGYVGEDVENILLRLLQVADLDIEEAQRGIIYIDEIDKIARKSENPSITRDVSGEGVQQALLKMLEGTIANVPPQGGRKHPYQDCIQIDTRNILFICGGAFVGLEKLVDRRLGKKSIGFVHPEESKTKEQRAAAILRHMEPEDLVQFGLIPEFIGRMPVTAVLDPLDETALTEILTEPRDALVKQYQKLMHMDSVELEFRQDAIEAIAREAFRRKTGARALRGIVEEIMLEVMYELPSRQDVTHCTITREMVEKRSSADVLLLPSSLPTPESA</sequence>
<feature type="chain" id="PRO_0000160441" description="ATP-dependent Clp protease ATP-binding subunit ClpX">
    <location>
        <begin position="1"/>
        <end position="449"/>
    </location>
</feature>
<feature type="domain" description="ClpX-type ZB" evidence="2">
    <location>
        <begin position="1"/>
        <end position="51"/>
    </location>
</feature>
<feature type="region of interest" description="Disordered" evidence="3">
    <location>
        <begin position="49"/>
        <end position="82"/>
    </location>
</feature>
<feature type="binding site" evidence="2">
    <location>
        <position position="10"/>
    </location>
    <ligand>
        <name>Zn(2+)</name>
        <dbReference type="ChEBI" id="CHEBI:29105"/>
    </ligand>
</feature>
<feature type="binding site" evidence="2">
    <location>
        <position position="13"/>
    </location>
    <ligand>
        <name>Zn(2+)</name>
        <dbReference type="ChEBI" id="CHEBI:29105"/>
    </ligand>
</feature>
<feature type="binding site" evidence="2">
    <location>
        <position position="32"/>
    </location>
    <ligand>
        <name>Zn(2+)</name>
        <dbReference type="ChEBI" id="CHEBI:29105"/>
    </ligand>
</feature>
<feature type="binding site" evidence="2">
    <location>
        <position position="35"/>
    </location>
    <ligand>
        <name>Zn(2+)</name>
        <dbReference type="ChEBI" id="CHEBI:29105"/>
    </ligand>
</feature>
<feature type="binding site" evidence="1">
    <location>
        <begin position="146"/>
        <end position="153"/>
    </location>
    <ligand>
        <name>ATP</name>
        <dbReference type="ChEBI" id="CHEBI:30616"/>
    </ligand>
</feature>
<feature type="sequence conflict" description="In Ref. 1; AAB68678." evidence="4" ref="1">
    <original>E</original>
    <variation>EF</variation>
    <location>
        <position position="128"/>
    </location>
</feature>
<dbReference type="EMBL" id="U92039">
    <property type="protein sequence ID" value="AAB68678.1"/>
    <property type="molecule type" value="Genomic_DNA"/>
</dbReference>
<dbReference type="EMBL" id="CP000100">
    <property type="protein sequence ID" value="ABB58556.1"/>
    <property type="molecule type" value="Genomic_DNA"/>
</dbReference>
<dbReference type="RefSeq" id="WP_011243893.1">
    <property type="nucleotide sequence ID" value="NZ_JACJTX010000001.1"/>
</dbReference>
<dbReference type="SMR" id="O34126"/>
<dbReference type="STRING" id="1140.Synpcc7942_2526"/>
<dbReference type="PaxDb" id="1140-Synpcc7942_2526"/>
<dbReference type="KEGG" id="syf:Synpcc7942_2526"/>
<dbReference type="eggNOG" id="COG1219">
    <property type="taxonomic scope" value="Bacteria"/>
</dbReference>
<dbReference type="HOGENOM" id="CLU_014218_8_2_3"/>
<dbReference type="OrthoDB" id="9804062at2"/>
<dbReference type="BioCyc" id="MetaCyc:SYNPCC7942_2526-MONOMER"/>
<dbReference type="BioCyc" id="SYNEL:SYNPCC7942_2526-MONOMER"/>
<dbReference type="Proteomes" id="UP000889800">
    <property type="component" value="Chromosome"/>
</dbReference>
<dbReference type="GO" id="GO:0009376">
    <property type="term" value="C:HslUV protease complex"/>
    <property type="evidence" value="ECO:0007669"/>
    <property type="project" value="TreeGrafter"/>
</dbReference>
<dbReference type="GO" id="GO:0005524">
    <property type="term" value="F:ATP binding"/>
    <property type="evidence" value="ECO:0007669"/>
    <property type="project" value="UniProtKB-UniRule"/>
</dbReference>
<dbReference type="GO" id="GO:0016887">
    <property type="term" value="F:ATP hydrolysis activity"/>
    <property type="evidence" value="ECO:0007669"/>
    <property type="project" value="InterPro"/>
</dbReference>
<dbReference type="GO" id="GO:0140662">
    <property type="term" value="F:ATP-dependent protein folding chaperone"/>
    <property type="evidence" value="ECO:0007669"/>
    <property type="project" value="InterPro"/>
</dbReference>
<dbReference type="GO" id="GO:0046983">
    <property type="term" value="F:protein dimerization activity"/>
    <property type="evidence" value="ECO:0007669"/>
    <property type="project" value="InterPro"/>
</dbReference>
<dbReference type="GO" id="GO:0051082">
    <property type="term" value="F:unfolded protein binding"/>
    <property type="evidence" value="ECO:0007669"/>
    <property type="project" value="UniProtKB-UniRule"/>
</dbReference>
<dbReference type="GO" id="GO:0008270">
    <property type="term" value="F:zinc ion binding"/>
    <property type="evidence" value="ECO:0007669"/>
    <property type="project" value="InterPro"/>
</dbReference>
<dbReference type="GO" id="GO:0051301">
    <property type="term" value="P:cell division"/>
    <property type="evidence" value="ECO:0007669"/>
    <property type="project" value="TreeGrafter"/>
</dbReference>
<dbReference type="GO" id="GO:0051603">
    <property type="term" value="P:proteolysis involved in protein catabolic process"/>
    <property type="evidence" value="ECO:0007669"/>
    <property type="project" value="TreeGrafter"/>
</dbReference>
<dbReference type="CDD" id="cd19497">
    <property type="entry name" value="RecA-like_ClpX"/>
    <property type="match status" value="1"/>
</dbReference>
<dbReference type="FunFam" id="1.10.8.60:FF:000002">
    <property type="entry name" value="ATP-dependent Clp protease ATP-binding subunit ClpX"/>
    <property type="match status" value="1"/>
</dbReference>
<dbReference type="FunFam" id="3.40.50.300:FF:000005">
    <property type="entry name" value="ATP-dependent Clp protease ATP-binding subunit ClpX"/>
    <property type="match status" value="1"/>
</dbReference>
<dbReference type="Gene3D" id="1.10.8.60">
    <property type="match status" value="1"/>
</dbReference>
<dbReference type="Gene3D" id="6.20.220.10">
    <property type="entry name" value="ClpX chaperone, C4-type zinc finger domain"/>
    <property type="match status" value="1"/>
</dbReference>
<dbReference type="Gene3D" id="3.40.50.300">
    <property type="entry name" value="P-loop containing nucleotide triphosphate hydrolases"/>
    <property type="match status" value="1"/>
</dbReference>
<dbReference type="HAMAP" id="MF_00175">
    <property type="entry name" value="ClpX"/>
    <property type="match status" value="1"/>
</dbReference>
<dbReference type="InterPro" id="IPR003593">
    <property type="entry name" value="AAA+_ATPase"/>
</dbReference>
<dbReference type="InterPro" id="IPR050052">
    <property type="entry name" value="ATP-dep_Clp_protease_ClpX"/>
</dbReference>
<dbReference type="InterPro" id="IPR003959">
    <property type="entry name" value="ATPase_AAA_core"/>
</dbReference>
<dbReference type="InterPro" id="IPR019489">
    <property type="entry name" value="Clp_ATPase_C"/>
</dbReference>
<dbReference type="InterPro" id="IPR004487">
    <property type="entry name" value="Clp_protease_ATP-bd_su_ClpX"/>
</dbReference>
<dbReference type="InterPro" id="IPR046425">
    <property type="entry name" value="ClpX_bact"/>
</dbReference>
<dbReference type="InterPro" id="IPR027417">
    <property type="entry name" value="P-loop_NTPase"/>
</dbReference>
<dbReference type="InterPro" id="IPR010603">
    <property type="entry name" value="Znf_CppX_C4"/>
</dbReference>
<dbReference type="InterPro" id="IPR038366">
    <property type="entry name" value="Znf_CppX_C4_sf"/>
</dbReference>
<dbReference type="NCBIfam" id="TIGR00382">
    <property type="entry name" value="clpX"/>
    <property type="match status" value="1"/>
</dbReference>
<dbReference type="NCBIfam" id="NF003745">
    <property type="entry name" value="PRK05342.1"/>
    <property type="match status" value="1"/>
</dbReference>
<dbReference type="PANTHER" id="PTHR48102:SF7">
    <property type="entry name" value="ATP-DEPENDENT CLP PROTEASE ATP-BINDING SUBUNIT CLPX-LIKE, MITOCHONDRIAL"/>
    <property type="match status" value="1"/>
</dbReference>
<dbReference type="PANTHER" id="PTHR48102">
    <property type="entry name" value="ATP-DEPENDENT CLP PROTEASE ATP-BINDING SUBUNIT CLPX-LIKE, MITOCHONDRIAL-RELATED"/>
    <property type="match status" value="1"/>
</dbReference>
<dbReference type="Pfam" id="PF07724">
    <property type="entry name" value="AAA_2"/>
    <property type="match status" value="1"/>
</dbReference>
<dbReference type="Pfam" id="PF10431">
    <property type="entry name" value="ClpB_D2-small"/>
    <property type="match status" value="1"/>
</dbReference>
<dbReference type="Pfam" id="PF06689">
    <property type="entry name" value="zf-C4_ClpX"/>
    <property type="match status" value="1"/>
</dbReference>
<dbReference type="SMART" id="SM00382">
    <property type="entry name" value="AAA"/>
    <property type="match status" value="1"/>
</dbReference>
<dbReference type="SMART" id="SM01086">
    <property type="entry name" value="ClpB_D2-small"/>
    <property type="match status" value="1"/>
</dbReference>
<dbReference type="SMART" id="SM00994">
    <property type="entry name" value="zf-C4_ClpX"/>
    <property type="match status" value="1"/>
</dbReference>
<dbReference type="SUPFAM" id="SSF57716">
    <property type="entry name" value="Glucocorticoid receptor-like (DNA-binding domain)"/>
    <property type="match status" value="1"/>
</dbReference>
<dbReference type="SUPFAM" id="SSF52540">
    <property type="entry name" value="P-loop containing nucleoside triphosphate hydrolases"/>
    <property type="match status" value="1"/>
</dbReference>
<dbReference type="PROSITE" id="PS51902">
    <property type="entry name" value="CLPX_ZB"/>
    <property type="match status" value="1"/>
</dbReference>
<name>CLPX_SYNE7</name>
<gene>
    <name evidence="1" type="primary">clpX</name>
    <name type="ordered locus">Synpcc7942_2526</name>
</gene>
<proteinExistence type="inferred from homology"/>
<comment type="function">
    <text evidence="1">ATP-dependent specificity component of the Clp protease. It directs the protease to specific substrates. Can perform chaperone functions in the absence of ClpP.</text>
</comment>
<comment type="subunit">
    <text evidence="1">Component of the ClpX-ClpP complex. Forms a hexameric ring that, in the presence of ATP, binds to fourteen ClpP subunits assembled into a disk-like structure with a central cavity, resembling the structure of eukaryotic proteasomes.</text>
</comment>
<comment type="similarity">
    <text evidence="1">Belongs to the ClpX chaperone family.</text>
</comment>
<organism>
    <name type="scientific">Synechococcus elongatus (strain ATCC 33912 / PCC 7942 / FACHB-805)</name>
    <name type="common">Anacystis nidulans R2</name>
    <dbReference type="NCBI Taxonomy" id="1140"/>
    <lineage>
        <taxon>Bacteria</taxon>
        <taxon>Bacillati</taxon>
        <taxon>Cyanobacteriota</taxon>
        <taxon>Cyanophyceae</taxon>
        <taxon>Synechococcales</taxon>
        <taxon>Synechococcaceae</taxon>
        <taxon>Synechococcus</taxon>
    </lineage>
</organism>
<protein>
    <recommendedName>
        <fullName evidence="1">ATP-dependent Clp protease ATP-binding subunit ClpX</fullName>
    </recommendedName>
</protein>
<reference key="1">
    <citation type="journal article" date="2002" name="Microbiology">
        <title>The clpP multigene family for the ATP-dependent Clp protease in the cyanobacterium Synechococcus.</title>
        <authorList>
            <person name="Schelin J."/>
            <person name="Lindmark F."/>
            <person name="Clarke A.K."/>
        </authorList>
    </citation>
    <scope>NUCLEOTIDE SEQUENCE [GENOMIC DNA]</scope>
</reference>
<reference key="2">
    <citation type="submission" date="2005-08" db="EMBL/GenBank/DDBJ databases">
        <title>Complete sequence of chromosome 1 of Synechococcus elongatus PCC 7942.</title>
        <authorList>
            <consortium name="US DOE Joint Genome Institute"/>
            <person name="Copeland A."/>
            <person name="Lucas S."/>
            <person name="Lapidus A."/>
            <person name="Barry K."/>
            <person name="Detter J.C."/>
            <person name="Glavina T."/>
            <person name="Hammon N."/>
            <person name="Israni S."/>
            <person name="Pitluck S."/>
            <person name="Schmutz J."/>
            <person name="Larimer F."/>
            <person name="Land M."/>
            <person name="Kyrpides N."/>
            <person name="Lykidis A."/>
            <person name="Golden S."/>
            <person name="Richardson P."/>
        </authorList>
    </citation>
    <scope>NUCLEOTIDE SEQUENCE [LARGE SCALE GENOMIC DNA]</scope>
    <source>
        <strain>ATCC 33912 / PCC 7942 / FACHB-805</strain>
    </source>
</reference>
<accession>O34126</accession>
<accession>Q31K63</accession>
<keyword id="KW-0067">ATP-binding</keyword>
<keyword id="KW-0143">Chaperone</keyword>
<keyword id="KW-0479">Metal-binding</keyword>
<keyword id="KW-0547">Nucleotide-binding</keyword>
<keyword id="KW-1185">Reference proteome</keyword>
<keyword id="KW-0862">Zinc</keyword>
<evidence type="ECO:0000255" key="1">
    <source>
        <dbReference type="HAMAP-Rule" id="MF_00175"/>
    </source>
</evidence>
<evidence type="ECO:0000255" key="2">
    <source>
        <dbReference type="PROSITE-ProRule" id="PRU01250"/>
    </source>
</evidence>
<evidence type="ECO:0000256" key="3">
    <source>
        <dbReference type="SAM" id="MobiDB-lite"/>
    </source>
</evidence>
<evidence type="ECO:0000305" key="4"/>